<proteinExistence type="inferred from homology"/>
<accession>A5IUK6</accession>
<sequence>MAAIKPITTYKGKIVPLFNDNIDTDQIIPKVHLKRISKSGFGPFAFDEWRYLPDGSDNPDFNPNKPQYKGASILITGDNFGCGSSREHAAWALKDYGFHIIIAGSFSDIFYMNCTKNAMLPIVLEKSAREHLAQYEEIEIDLPNQTVSSPDKRFHFEIDETWKNKLVNGLDDIAITLQYESLIEKYEKSL</sequence>
<dbReference type="EC" id="4.2.1.33" evidence="1"/>
<dbReference type="EMBL" id="CP000703">
    <property type="protein sequence ID" value="ABQ49879.1"/>
    <property type="molecule type" value="Genomic_DNA"/>
</dbReference>
<dbReference type="RefSeq" id="WP_000718953.1">
    <property type="nucleotide sequence ID" value="NC_009487.1"/>
</dbReference>
<dbReference type="SMR" id="A5IUK6"/>
<dbReference type="KEGG" id="saj:SaurJH9_2097"/>
<dbReference type="HOGENOM" id="CLU_081378_0_3_9"/>
<dbReference type="UniPathway" id="UPA00048">
    <property type="reaction ID" value="UER00071"/>
</dbReference>
<dbReference type="GO" id="GO:0009316">
    <property type="term" value="C:3-isopropylmalate dehydratase complex"/>
    <property type="evidence" value="ECO:0007669"/>
    <property type="project" value="InterPro"/>
</dbReference>
<dbReference type="GO" id="GO:0003861">
    <property type="term" value="F:3-isopropylmalate dehydratase activity"/>
    <property type="evidence" value="ECO:0007669"/>
    <property type="project" value="UniProtKB-UniRule"/>
</dbReference>
<dbReference type="GO" id="GO:0009098">
    <property type="term" value="P:L-leucine biosynthetic process"/>
    <property type="evidence" value="ECO:0007669"/>
    <property type="project" value="UniProtKB-UniRule"/>
</dbReference>
<dbReference type="CDD" id="cd01577">
    <property type="entry name" value="IPMI_Swivel"/>
    <property type="match status" value="1"/>
</dbReference>
<dbReference type="FunFam" id="3.20.19.10:FF:000003">
    <property type="entry name" value="3-isopropylmalate dehydratase small subunit"/>
    <property type="match status" value="1"/>
</dbReference>
<dbReference type="Gene3D" id="3.20.19.10">
    <property type="entry name" value="Aconitase, domain 4"/>
    <property type="match status" value="1"/>
</dbReference>
<dbReference type="HAMAP" id="MF_01031">
    <property type="entry name" value="LeuD_type1"/>
    <property type="match status" value="1"/>
</dbReference>
<dbReference type="InterPro" id="IPR004431">
    <property type="entry name" value="3-IsopropMal_deHydase_ssu"/>
</dbReference>
<dbReference type="InterPro" id="IPR015928">
    <property type="entry name" value="Aconitase/3IPM_dehydase_swvl"/>
</dbReference>
<dbReference type="InterPro" id="IPR000573">
    <property type="entry name" value="AconitaseA/IPMdHydase_ssu_swvl"/>
</dbReference>
<dbReference type="InterPro" id="IPR033940">
    <property type="entry name" value="IPMI_Swivel"/>
</dbReference>
<dbReference type="InterPro" id="IPR050075">
    <property type="entry name" value="LeuD"/>
</dbReference>
<dbReference type="NCBIfam" id="TIGR00171">
    <property type="entry name" value="leuD"/>
    <property type="match status" value="1"/>
</dbReference>
<dbReference type="NCBIfam" id="NF002458">
    <property type="entry name" value="PRK01641.1"/>
    <property type="match status" value="1"/>
</dbReference>
<dbReference type="PANTHER" id="PTHR43345:SF5">
    <property type="entry name" value="3-ISOPROPYLMALATE DEHYDRATASE SMALL SUBUNIT"/>
    <property type="match status" value="1"/>
</dbReference>
<dbReference type="PANTHER" id="PTHR43345">
    <property type="entry name" value="3-ISOPROPYLMALATE DEHYDRATASE SMALL SUBUNIT 2-RELATED-RELATED"/>
    <property type="match status" value="1"/>
</dbReference>
<dbReference type="Pfam" id="PF00694">
    <property type="entry name" value="Aconitase_C"/>
    <property type="match status" value="1"/>
</dbReference>
<dbReference type="SUPFAM" id="SSF52016">
    <property type="entry name" value="LeuD/IlvD-like"/>
    <property type="match status" value="1"/>
</dbReference>
<reference key="1">
    <citation type="submission" date="2007-05" db="EMBL/GenBank/DDBJ databases">
        <title>Complete sequence of chromosome of Staphylococcus aureus subsp. aureus JH9.</title>
        <authorList>
            <consortium name="US DOE Joint Genome Institute"/>
            <person name="Copeland A."/>
            <person name="Lucas S."/>
            <person name="Lapidus A."/>
            <person name="Barry K."/>
            <person name="Detter J.C."/>
            <person name="Glavina del Rio T."/>
            <person name="Hammon N."/>
            <person name="Israni S."/>
            <person name="Pitluck S."/>
            <person name="Chain P."/>
            <person name="Malfatti S."/>
            <person name="Shin M."/>
            <person name="Vergez L."/>
            <person name="Schmutz J."/>
            <person name="Larimer F."/>
            <person name="Land M."/>
            <person name="Hauser L."/>
            <person name="Kyrpides N."/>
            <person name="Kim E."/>
            <person name="Tomasz A."/>
            <person name="Richardson P."/>
        </authorList>
    </citation>
    <scope>NUCLEOTIDE SEQUENCE [LARGE SCALE GENOMIC DNA]</scope>
    <source>
        <strain>JH9</strain>
    </source>
</reference>
<feature type="chain" id="PRO_1000084270" description="3-isopropylmalate dehydratase small subunit">
    <location>
        <begin position="1"/>
        <end position="190"/>
    </location>
</feature>
<comment type="function">
    <text evidence="1">Catalyzes the isomerization between 2-isopropylmalate and 3-isopropylmalate, via the formation of 2-isopropylmaleate.</text>
</comment>
<comment type="catalytic activity">
    <reaction evidence="1">
        <text>(2R,3S)-3-isopropylmalate = (2S)-2-isopropylmalate</text>
        <dbReference type="Rhea" id="RHEA:32287"/>
        <dbReference type="ChEBI" id="CHEBI:1178"/>
        <dbReference type="ChEBI" id="CHEBI:35121"/>
        <dbReference type="EC" id="4.2.1.33"/>
    </reaction>
</comment>
<comment type="pathway">
    <text evidence="1">Amino-acid biosynthesis; L-leucine biosynthesis; L-leucine from 3-methyl-2-oxobutanoate: step 2/4.</text>
</comment>
<comment type="subunit">
    <text evidence="1">Heterodimer of LeuC and LeuD.</text>
</comment>
<comment type="similarity">
    <text evidence="1">Belongs to the LeuD family. LeuD type 1 subfamily.</text>
</comment>
<evidence type="ECO:0000255" key="1">
    <source>
        <dbReference type="HAMAP-Rule" id="MF_01031"/>
    </source>
</evidence>
<protein>
    <recommendedName>
        <fullName evidence="1">3-isopropylmalate dehydratase small subunit</fullName>
        <ecNumber evidence="1">4.2.1.33</ecNumber>
    </recommendedName>
    <alternativeName>
        <fullName evidence="1">Alpha-IPM isomerase</fullName>
        <shortName evidence="1">IPMI</shortName>
    </alternativeName>
    <alternativeName>
        <fullName evidence="1">Isopropylmalate isomerase</fullName>
    </alternativeName>
</protein>
<name>LEUD_STAA9</name>
<organism>
    <name type="scientific">Staphylococcus aureus (strain JH9)</name>
    <dbReference type="NCBI Taxonomy" id="359786"/>
    <lineage>
        <taxon>Bacteria</taxon>
        <taxon>Bacillati</taxon>
        <taxon>Bacillota</taxon>
        <taxon>Bacilli</taxon>
        <taxon>Bacillales</taxon>
        <taxon>Staphylococcaceae</taxon>
        <taxon>Staphylococcus</taxon>
    </lineage>
</organism>
<keyword id="KW-0028">Amino-acid biosynthesis</keyword>
<keyword id="KW-0100">Branched-chain amino acid biosynthesis</keyword>
<keyword id="KW-0432">Leucine biosynthesis</keyword>
<keyword id="KW-0456">Lyase</keyword>
<gene>
    <name evidence="1" type="primary">leuD</name>
    <name type="ordered locus">SaurJH9_2097</name>
</gene>